<evidence type="ECO:0000250" key="1">
    <source>
        <dbReference type="UniProtKB" id="V9LLX6"/>
    </source>
</evidence>
<evidence type="ECO:0000269" key="2">
    <source>
    </source>
</evidence>
<evidence type="ECO:0000305" key="3"/>
<evidence type="ECO:0007829" key="4">
    <source>
        <dbReference type="PDB" id="5VOB"/>
    </source>
</evidence>
<gene>
    <name type="primary">UL128</name>
</gene>
<organism>
    <name type="scientific">Human cytomegalovirus (strain AD169)</name>
    <name type="common">HHV-5</name>
    <name type="synonym">Human herpesvirus 5</name>
    <dbReference type="NCBI Taxonomy" id="10360"/>
    <lineage>
        <taxon>Viruses</taxon>
        <taxon>Duplodnaviria</taxon>
        <taxon>Heunggongvirae</taxon>
        <taxon>Peploviricota</taxon>
        <taxon>Herviviricetes</taxon>
        <taxon>Herpesvirales</taxon>
        <taxon>Orthoherpesviridae</taxon>
        <taxon>Betaherpesvirinae</taxon>
        <taxon>Cytomegalovirus</taxon>
        <taxon>Cytomegalovirus humanbeta5</taxon>
        <taxon>Human cytomegalovirus</taxon>
    </lineage>
</organism>
<reference key="1">
    <citation type="journal article" date="1990" name="Curr. Top. Microbiol. Immunol.">
        <title>Analysis of the protein-coding content of the sequence of human cytomegalovirus strain AD169.</title>
        <authorList>
            <person name="Chee M.S."/>
            <person name="Bankier A.T."/>
            <person name="Beck S."/>
            <person name="Bohni R."/>
            <person name="Brown C.M."/>
            <person name="Cerny R."/>
            <person name="Horsnell T."/>
            <person name="Hutchison C.A. III"/>
            <person name="Kouzarides T."/>
            <person name="Martignetti J.A."/>
            <person name="Preddie E."/>
            <person name="Satchwell S.C."/>
            <person name="Tomlinson P."/>
            <person name="Weston K.M."/>
            <person name="Barrell B.G."/>
        </authorList>
    </citation>
    <scope>NUCLEOTIDE SEQUENCE [LARGE SCALE GENOMIC DNA]</scope>
</reference>
<reference key="2">
    <citation type="journal article" date="2003" name="J. Gen. Virol.">
        <title>The human cytomegalovirus genome revisited: comparison with the chimpanzee cytomegalovirus genome.</title>
        <authorList>
            <person name="Davison A.J."/>
            <person name="Dolan A."/>
            <person name="Akter P."/>
            <person name="Addison C."/>
            <person name="Dargan D.J."/>
            <person name="Alcendor D.J."/>
            <person name="McGeoch D.J."/>
            <person name="Hayward G.S."/>
        </authorList>
    </citation>
    <scope>GENOME REANNOTATION</scope>
</reference>
<reference key="3">
    <citation type="journal article" date="2003" name="J. Gen. Virol.">
        <authorList>
            <person name="Davison A.J."/>
            <person name="Dolan A."/>
            <person name="Akter P."/>
            <person name="Addison C."/>
            <person name="Dargan D.J."/>
            <person name="Alcendor D.J."/>
            <person name="McGeoch D.J."/>
            <person name="Hayward G.S."/>
        </authorList>
    </citation>
    <scope>ERRATUM OF PUBMED:12533697</scope>
</reference>
<reference key="4">
    <citation type="journal article" date="2017" name="Sci. Immunol.">
        <title>Structural basis for potent antibody-mediated neutralization of human cytomegalovirus.</title>
        <authorList>
            <person name="Chandramouli S."/>
            <person name="Malito E."/>
            <person name="Nguyen T."/>
            <person name="Luisi K."/>
            <person name="Donnarumma D."/>
            <person name="Xing Y."/>
            <person name="Norais N."/>
            <person name="Yu D."/>
            <person name="Carfi A."/>
        </authorList>
    </citation>
    <scope>X-RAY CRYSTALLOGRAPHY (3.02 ANGSTROMS)</scope>
    <scope>INTERACTION WITH GL; GH; UL130 AND UL131A</scope>
</reference>
<proteinExistence type="evidence at protein level"/>
<sequence>MSPKDLTPFLTTLWLLLGHSRVPRVRAEECCEFINVNHPPERCYDFKMCNRFTVALRCPDGEVCYSPEKTAEIRGIVTTMTHSLTRQVVHNKLTSCNYNPLYLEADGRIRCGKVNDKAQYLLGAAGSVPYRWINLEYDKITRIVGLDQYLESVKKHKRLDVCRAKMGYMLQ</sequence>
<comment type="function">
    <text evidence="1">Plays a role in viral entry into host cells. Forms a pentameric complex at the surface of the viral envelope together with gH, gL, UL130 and UL131. This complex is required for entry in epithelial, endothelial and myeloid host cells. Mechanistically, engages host receptor(s) including neurophilin 2/NRP2 to mediate infection. Additionally, monomeric UL128 may interfere with certain inflammatory cytokines to increase infection and dissemination by blocking monocytes migration.</text>
</comment>
<comment type="subunit">
    <text evidence="1 2">Forms the envelope pentamer complex (PC) composed of gH, gL, UL128, UL130, and UL131A (PubMed:28783665). The pentamer interacts with host NRP2 (By similarity).</text>
</comment>
<comment type="subcellular location">
    <subcellularLocation>
        <location evidence="1">Virion membrane</location>
    </subcellularLocation>
    <text evidence="1">Found as a pentameric complex at the surface of virion envelope.</text>
</comment>
<comment type="similarity">
    <text evidence="3">Belongs to the HHV-5 UL128 protein family.</text>
</comment>
<comment type="sequence caution" evidence="3">
    <conflict type="erroneous gene model prediction">
        <sequence resource="EMBL-CDS" id="CAA35330"/>
    </conflict>
</comment>
<protein>
    <recommendedName>
        <fullName>Uncharacterized protein UL128</fullName>
    </recommendedName>
</protein>
<name>UL128_HCMVA</name>
<dbReference type="EMBL" id="X17403">
    <property type="protein sequence ID" value="CAA35330.1"/>
    <property type="status" value="ALT_SEQ"/>
    <property type="molecule type" value="Genomic_DNA"/>
</dbReference>
<dbReference type="EMBL" id="BK000394">
    <property type="protein sequence ID" value="DAA00114.1"/>
    <property type="molecule type" value="Genomic_DNA"/>
</dbReference>
<dbReference type="PIR" id="S09894">
    <property type="entry name" value="S09894"/>
</dbReference>
<dbReference type="PDB" id="5VOB">
    <property type="method" value="X-ray"/>
    <property type="resolution" value="3.02 A"/>
    <property type="chains" value="C=1-171"/>
</dbReference>
<dbReference type="PDB" id="5VOC">
    <property type="method" value="X-ray"/>
    <property type="resolution" value="3.99 A"/>
    <property type="chains" value="C=1-171"/>
</dbReference>
<dbReference type="PDB" id="5VOD">
    <property type="method" value="X-ray"/>
    <property type="resolution" value="5.90 A"/>
    <property type="chains" value="C=1-171"/>
</dbReference>
<dbReference type="PDB" id="7KBB">
    <property type="method" value="EM"/>
    <property type="resolution" value="4.02 A"/>
    <property type="chains" value="C=28-171"/>
</dbReference>
<dbReference type="PDB" id="7M22">
    <property type="method" value="EM"/>
    <property type="resolution" value="3.65 A"/>
    <property type="chains" value="C=28-171"/>
</dbReference>
<dbReference type="PDB" id="7M30">
    <property type="method" value="EM"/>
    <property type="resolution" value="3.81 A"/>
    <property type="chains" value="C=28-171"/>
</dbReference>
<dbReference type="PDB" id="8TEA">
    <property type="method" value="EM"/>
    <property type="resolution" value="3.40 A"/>
    <property type="chains" value="C=28-171"/>
</dbReference>
<dbReference type="PDBsum" id="5VOB"/>
<dbReference type="PDBsum" id="5VOC"/>
<dbReference type="PDBsum" id="5VOD"/>
<dbReference type="PDBsum" id="7KBB"/>
<dbReference type="PDBsum" id="7M22"/>
<dbReference type="PDBsum" id="7M30"/>
<dbReference type="PDBsum" id="8TEA"/>
<dbReference type="SMR" id="P16837"/>
<dbReference type="ABCD" id="P16837">
    <property type="antibodies" value="1 sequenced antibody"/>
</dbReference>
<dbReference type="Proteomes" id="UP000008991">
    <property type="component" value="Segment"/>
</dbReference>
<dbReference type="Proteomes" id="UP000008992">
    <property type="component" value="Segment"/>
</dbReference>
<dbReference type="GO" id="GO:0016020">
    <property type="term" value="C:membrane"/>
    <property type="evidence" value="ECO:0007669"/>
    <property type="project" value="UniProtKB-KW"/>
</dbReference>
<dbReference type="GO" id="GO:0055036">
    <property type="term" value="C:virion membrane"/>
    <property type="evidence" value="ECO:0007669"/>
    <property type="project" value="UniProtKB-SubCell"/>
</dbReference>
<dbReference type="GO" id="GO:0098670">
    <property type="term" value="P:entry receptor-mediated virion attachment to host cell"/>
    <property type="evidence" value="ECO:0007669"/>
    <property type="project" value="UniProtKB-KW"/>
</dbReference>
<dbReference type="GO" id="GO:0046718">
    <property type="term" value="P:symbiont entry into host cell"/>
    <property type="evidence" value="ECO:0007669"/>
    <property type="project" value="UniProtKB-KW"/>
</dbReference>
<accession>P16837</accession>
<accession>Q7M6S2</accession>
<organismHost>
    <name type="scientific">Homo sapiens</name>
    <name type="common">Human</name>
    <dbReference type="NCBI Taxonomy" id="9606"/>
</organismHost>
<feature type="chain" id="PRO_0000115363" description="Uncharacterized protein UL128">
    <location>
        <begin position="1"/>
        <end position="171"/>
    </location>
</feature>
<feature type="strand" evidence="4">
    <location>
        <begin position="45"/>
        <end position="52"/>
    </location>
</feature>
<feature type="strand" evidence="4">
    <location>
        <begin position="54"/>
        <end position="57"/>
    </location>
</feature>
<feature type="strand" evidence="4">
    <location>
        <begin position="62"/>
        <end position="65"/>
    </location>
</feature>
<feature type="helix" evidence="4">
    <location>
        <begin position="70"/>
        <end position="81"/>
    </location>
</feature>
<feature type="helix" evidence="4">
    <location>
        <begin position="86"/>
        <end position="92"/>
    </location>
</feature>
<feature type="helix" evidence="4">
    <location>
        <begin position="94"/>
        <end position="96"/>
    </location>
</feature>
<feature type="strand" evidence="4">
    <location>
        <begin position="101"/>
        <end position="103"/>
    </location>
</feature>
<feature type="strand" evidence="4">
    <location>
        <begin position="109"/>
        <end position="111"/>
    </location>
</feature>
<feature type="strand" evidence="4">
    <location>
        <begin position="118"/>
        <end position="123"/>
    </location>
</feature>
<feature type="strand" evidence="4">
    <location>
        <begin position="125"/>
        <end position="127"/>
    </location>
</feature>
<feature type="strand" evidence="4">
    <location>
        <begin position="130"/>
        <end position="132"/>
    </location>
</feature>
<feature type="helix" evidence="4">
    <location>
        <begin position="146"/>
        <end position="154"/>
    </location>
</feature>
<keyword id="KW-0002">3D-structure</keyword>
<keyword id="KW-0945">Host-virus interaction</keyword>
<keyword id="KW-0472">Membrane</keyword>
<keyword id="KW-1185">Reference proteome</keyword>
<keyword id="KW-1161">Viral attachment to host cell</keyword>
<keyword id="KW-1234">Viral attachment to host entry receptor</keyword>
<keyword id="KW-0946">Virion</keyword>
<keyword id="KW-1160">Virus entry into host cell</keyword>